<evidence type="ECO:0000255" key="1">
    <source>
        <dbReference type="PROSITE-ProRule" id="PRU00387"/>
    </source>
</evidence>
<evidence type="ECO:0000305" key="2"/>
<evidence type="ECO:0007829" key="3">
    <source>
        <dbReference type="PDB" id="5LEJ"/>
    </source>
</evidence>
<evidence type="ECO:0007829" key="4">
    <source>
        <dbReference type="PDB" id="6EXK"/>
    </source>
</evidence>
<evidence type="ECO:0007829" key="5">
    <source>
        <dbReference type="PDB" id="6EXM"/>
    </source>
</evidence>
<reference key="1">
    <citation type="journal article" date="1991" name="Mol. Microbiol.">
        <title>Pleiotropic control of Listeria monocytogenes virulence factors by a gene that is autoregulated.</title>
        <authorList>
            <person name="Mengaud J."/>
            <person name="Dramsi S."/>
            <person name="Gouin E."/>
            <person name="Vazquez-Boland J.A."/>
            <person name="Milon G."/>
            <person name="Cossart P."/>
        </authorList>
    </citation>
    <scope>NUCLEOTIDE SEQUENCE [GENOMIC DNA]</scope>
    <source>
        <strain>LO28 / Serovar 1/2c</strain>
    </source>
</reference>
<reference key="2">
    <citation type="journal article" date="1990" name="Proc. Natl. Acad. Sci. U.S.A.">
        <title>Identification of a gene that positively regulates expression of listeriolysin, the major virulence factor of listeria monocytogenes.</title>
        <authorList>
            <person name="Leimeister-Waechter M."/>
            <person name="Haffner C."/>
            <person name="Domann E."/>
            <person name="Goebel W."/>
            <person name="Chakraborty T."/>
        </authorList>
    </citation>
    <scope>NUCLEOTIDE SEQUENCE [GENOMIC DNA]</scope>
    <source>
        <strain>EGD / Serovar 1/2a</strain>
    </source>
</reference>
<reference key="3">
    <citation type="journal article" date="1997" name="J. Bacteriol.">
        <title>A Gly145Ser substitution in the transcriptional activator PrfA causes constitutive overexpression of virulence factors in Listeria monocytogenes.</title>
        <authorList>
            <person name="Ripio M.T."/>
            <person name="Dominguez-Bernal G."/>
            <person name="Lara M."/>
            <person name="Suarez M."/>
            <person name="Vazquez-Boland J.A."/>
        </authorList>
    </citation>
    <scope>NUCLEOTIDE SEQUENCE [GENOMIC DNA]</scope>
    <source>
        <strain>P14 / Serovar 4B</strain>
    </source>
</reference>
<reference key="4">
    <citation type="journal article" date="2001" name="Science">
        <title>Comparative genomics of Listeria species.</title>
        <authorList>
            <person name="Glaser P."/>
            <person name="Frangeul L."/>
            <person name="Buchrieser C."/>
            <person name="Rusniok C."/>
            <person name="Amend A."/>
            <person name="Baquero F."/>
            <person name="Berche P."/>
            <person name="Bloecker H."/>
            <person name="Brandt P."/>
            <person name="Chakraborty T."/>
            <person name="Charbit A."/>
            <person name="Chetouani F."/>
            <person name="Couve E."/>
            <person name="de Daruvar A."/>
            <person name="Dehoux P."/>
            <person name="Domann E."/>
            <person name="Dominguez-Bernal G."/>
            <person name="Duchaud E."/>
            <person name="Durant L."/>
            <person name="Dussurget O."/>
            <person name="Entian K.-D."/>
            <person name="Fsihi H."/>
            <person name="Garcia-del Portillo F."/>
            <person name="Garrido P."/>
            <person name="Gautier L."/>
            <person name="Goebel W."/>
            <person name="Gomez-Lopez N."/>
            <person name="Hain T."/>
            <person name="Hauf J."/>
            <person name="Jackson D."/>
            <person name="Jones L.-M."/>
            <person name="Kaerst U."/>
            <person name="Kreft J."/>
            <person name="Kuhn M."/>
            <person name="Kunst F."/>
            <person name="Kurapkat G."/>
            <person name="Madueno E."/>
            <person name="Maitournam A."/>
            <person name="Mata Vicente J."/>
            <person name="Ng E."/>
            <person name="Nedjari H."/>
            <person name="Nordsiek G."/>
            <person name="Novella S."/>
            <person name="de Pablos B."/>
            <person name="Perez-Diaz J.-C."/>
            <person name="Purcell R."/>
            <person name="Remmel B."/>
            <person name="Rose M."/>
            <person name="Schlueter T."/>
            <person name="Simoes N."/>
            <person name="Tierrez A."/>
            <person name="Vazquez-Boland J.-A."/>
            <person name="Voss H."/>
            <person name="Wehland J."/>
            <person name="Cossart P."/>
        </authorList>
    </citation>
    <scope>NUCLEOTIDE SEQUENCE [LARGE SCALE GENOMIC DNA]</scope>
    <source>
        <strain>ATCC BAA-679 / EGD-e</strain>
    </source>
</reference>
<gene>
    <name type="primary">prfA</name>
    <name type="ordered locus">lmo0200</name>
</gene>
<dbReference type="EMBL" id="X61210">
    <property type="protein sequence ID" value="CAA43524.1"/>
    <property type="molecule type" value="Genomic_DNA"/>
</dbReference>
<dbReference type="EMBL" id="M55160">
    <property type="protein sequence ID" value="AAA25291.1"/>
    <property type="molecule type" value="Genomic_DNA"/>
</dbReference>
<dbReference type="EMBL" id="AJ002742">
    <property type="protein sequence ID" value="CAA05714.1"/>
    <property type="molecule type" value="Genomic_DNA"/>
</dbReference>
<dbReference type="EMBL" id="AL591974">
    <property type="protein sequence ID" value="CAD00727.1"/>
    <property type="molecule type" value="Genomic_DNA"/>
</dbReference>
<dbReference type="PIR" id="AI1099">
    <property type="entry name" value="AI1099"/>
</dbReference>
<dbReference type="PIR" id="S16890">
    <property type="entry name" value="S16890"/>
</dbReference>
<dbReference type="RefSeq" id="NP_463731.1">
    <property type="nucleotide sequence ID" value="NC_003210.1"/>
</dbReference>
<dbReference type="RefSeq" id="WP_003722729.1">
    <property type="nucleotide sequence ID" value="NZ_CP149495.1"/>
</dbReference>
<dbReference type="PDB" id="1OMI">
    <property type="method" value="X-ray"/>
    <property type="resolution" value="2.80 A"/>
    <property type="chains" value="A/B=7-237"/>
</dbReference>
<dbReference type="PDB" id="2BEO">
    <property type="method" value="X-ray"/>
    <property type="resolution" value="2.70 A"/>
    <property type="chains" value="A/B=2-237"/>
</dbReference>
<dbReference type="PDB" id="2BGC">
    <property type="method" value="X-ray"/>
    <property type="resolution" value="2.30 A"/>
    <property type="chains" value="A/B/D/E/F/G/H/I=2-237"/>
</dbReference>
<dbReference type="PDB" id="5F1R">
    <property type="method" value="X-ray"/>
    <property type="resolution" value="2.25 A"/>
    <property type="chains" value="A/B=1-237"/>
</dbReference>
<dbReference type="PDB" id="5LEJ">
    <property type="method" value="X-ray"/>
    <property type="resolution" value="2.70 A"/>
    <property type="chains" value="A/B=1-237"/>
</dbReference>
<dbReference type="PDB" id="5LEK">
    <property type="method" value="X-ray"/>
    <property type="resolution" value="2.80 A"/>
    <property type="chains" value="A/B=1-237"/>
</dbReference>
<dbReference type="PDB" id="5LRR">
    <property type="method" value="X-ray"/>
    <property type="resolution" value="2.17 A"/>
    <property type="chains" value="A/B/C/D/E/F/G/H=1-237"/>
</dbReference>
<dbReference type="PDB" id="5LRS">
    <property type="method" value="X-ray"/>
    <property type="resolution" value="2.90 A"/>
    <property type="chains" value="A/B=1-237"/>
</dbReference>
<dbReference type="PDB" id="5X6D">
    <property type="method" value="X-ray"/>
    <property type="resolution" value="2.94 A"/>
    <property type="chains" value="A/B/G/H/M/N=1-237"/>
</dbReference>
<dbReference type="PDB" id="5X6E">
    <property type="method" value="X-ray"/>
    <property type="resolution" value="2.99 A"/>
    <property type="chains" value="A/B/E/F/M/N=1-237"/>
</dbReference>
<dbReference type="PDB" id="6EUT">
    <property type="method" value="X-ray"/>
    <property type="resolution" value="1.90 A"/>
    <property type="chains" value="A/B=1-237"/>
</dbReference>
<dbReference type="PDB" id="6EUU">
    <property type="method" value="X-ray"/>
    <property type="resolution" value="2.60 A"/>
    <property type="chains" value="A/B=1-237"/>
</dbReference>
<dbReference type="PDB" id="6EUZ">
    <property type="method" value="X-ray"/>
    <property type="resolution" value="1.95 A"/>
    <property type="chains" value="A/B=1-237"/>
</dbReference>
<dbReference type="PDB" id="6EV0">
    <property type="method" value="X-ray"/>
    <property type="resolution" value="2.30 A"/>
    <property type="chains" value="A/B=1-237"/>
</dbReference>
<dbReference type="PDB" id="6EXK">
    <property type="method" value="X-ray"/>
    <property type="resolution" value="2.10 A"/>
    <property type="chains" value="A/B=1-237"/>
</dbReference>
<dbReference type="PDB" id="6EXL">
    <property type="method" value="X-ray"/>
    <property type="resolution" value="1.90 A"/>
    <property type="chains" value="A/B=1-237"/>
</dbReference>
<dbReference type="PDB" id="6EXM">
    <property type="method" value="X-ray"/>
    <property type="resolution" value="1.60 A"/>
    <property type="chains" value="A/B=1-237"/>
</dbReference>
<dbReference type="PDB" id="6HCK">
    <property type="method" value="X-ray"/>
    <property type="resolution" value="2.70 A"/>
    <property type="chains" value="A/B=1-237"/>
</dbReference>
<dbReference type="PDB" id="6QVY">
    <property type="method" value="X-ray"/>
    <property type="resolution" value="1.69 A"/>
    <property type="chains" value="A/B=1-237"/>
</dbReference>
<dbReference type="PDB" id="6QVZ">
    <property type="method" value="X-ray"/>
    <property type="resolution" value="2.71 A"/>
    <property type="chains" value="A/B=1-237"/>
</dbReference>
<dbReference type="PDB" id="6QW1">
    <property type="method" value="X-ray"/>
    <property type="resolution" value="1.84 A"/>
    <property type="chains" value="A/B=1-237"/>
</dbReference>
<dbReference type="PDB" id="6QW2">
    <property type="method" value="X-ray"/>
    <property type="resolution" value="2.60 A"/>
    <property type="chains" value="A/B=1-237"/>
</dbReference>
<dbReference type="PDB" id="6QWF">
    <property type="method" value="X-ray"/>
    <property type="resolution" value="2.70 A"/>
    <property type="chains" value="A/B=1-237"/>
</dbReference>
<dbReference type="PDB" id="6QWH">
    <property type="method" value="X-ray"/>
    <property type="resolution" value="2.90 A"/>
    <property type="chains" value="A/B=1-237"/>
</dbReference>
<dbReference type="PDB" id="6QWK">
    <property type="method" value="X-ray"/>
    <property type="resolution" value="2.90 A"/>
    <property type="chains" value="A/B=1-237"/>
</dbReference>
<dbReference type="PDB" id="6QWM">
    <property type="method" value="X-ray"/>
    <property type="resolution" value="2.90 A"/>
    <property type="chains" value="A/B=1-237"/>
</dbReference>
<dbReference type="PDB" id="6T5I">
    <property type="method" value="X-ray"/>
    <property type="resolution" value="2.00 A"/>
    <property type="chains" value="A/B=1-237"/>
</dbReference>
<dbReference type="PDB" id="8CB4">
    <property type="method" value="X-ray"/>
    <property type="resolution" value="2.57 A"/>
    <property type="chains" value="A/B=1-237"/>
</dbReference>
<dbReference type="PDB" id="8CB5">
    <property type="method" value="X-ray"/>
    <property type="resolution" value="2.25 A"/>
    <property type="chains" value="A/B=1-237"/>
</dbReference>
<dbReference type="PDB" id="8CB7">
    <property type="method" value="X-ray"/>
    <property type="resolution" value="2.85 A"/>
    <property type="chains" value="A/B=1-237"/>
</dbReference>
<dbReference type="PDB" id="8CB8">
    <property type="method" value="X-ray"/>
    <property type="resolution" value="2.25 A"/>
    <property type="chains" value="A/B=1-237"/>
</dbReference>
<dbReference type="PDB" id="8CBG">
    <property type="method" value="X-ray"/>
    <property type="resolution" value="3.00 A"/>
    <property type="chains" value="A/B=1-237"/>
</dbReference>
<dbReference type="PDB" id="8CBI">
    <property type="method" value="X-ray"/>
    <property type="resolution" value="2.40 A"/>
    <property type="chains" value="A/B=1-237"/>
</dbReference>
<dbReference type="PDB" id="8CBP">
    <property type="method" value="X-ray"/>
    <property type="resolution" value="2.70 A"/>
    <property type="chains" value="A/B=1-237"/>
</dbReference>
<dbReference type="PDBsum" id="1OMI"/>
<dbReference type="PDBsum" id="2BEO"/>
<dbReference type="PDBsum" id="2BGC"/>
<dbReference type="PDBsum" id="5F1R"/>
<dbReference type="PDBsum" id="5LEJ"/>
<dbReference type="PDBsum" id="5LEK"/>
<dbReference type="PDBsum" id="5LRR"/>
<dbReference type="PDBsum" id="5LRS"/>
<dbReference type="PDBsum" id="5X6D"/>
<dbReference type="PDBsum" id="5X6E"/>
<dbReference type="PDBsum" id="6EUT"/>
<dbReference type="PDBsum" id="6EUU"/>
<dbReference type="PDBsum" id="6EUZ"/>
<dbReference type="PDBsum" id="6EV0"/>
<dbReference type="PDBsum" id="6EXK"/>
<dbReference type="PDBsum" id="6EXL"/>
<dbReference type="PDBsum" id="6EXM"/>
<dbReference type="PDBsum" id="6HCK"/>
<dbReference type="PDBsum" id="6QVY"/>
<dbReference type="PDBsum" id="6QVZ"/>
<dbReference type="PDBsum" id="6QW1"/>
<dbReference type="PDBsum" id="6QW2"/>
<dbReference type="PDBsum" id="6QWF"/>
<dbReference type="PDBsum" id="6QWH"/>
<dbReference type="PDBsum" id="6QWK"/>
<dbReference type="PDBsum" id="6QWM"/>
<dbReference type="PDBsum" id="6T5I"/>
<dbReference type="PDBsum" id="8CB4"/>
<dbReference type="PDBsum" id="8CB5"/>
<dbReference type="PDBsum" id="8CB7"/>
<dbReference type="PDBsum" id="8CB8"/>
<dbReference type="PDBsum" id="8CBG"/>
<dbReference type="PDBsum" id="8CBI"/>
<dbReference type="PDBsum" id="8CBP"/>
<dbReference type="SMR" id="P22262"/>
<dbReference type="STRING" id="169963.gene:17592836"/>
<dbReference type="BindingDB" id="P22262"/>
<dbReference type="ChEMBL" id="CHEMBL4295575"/>
<dbReference type="DrugBank" id="DB04447">
    <property type="generic name" value="1,4-Dithiothreitol"/>
</dbReference>
<dbReference type="DrugBank" id="DB01692">
    <property type="generic name" value="Dithioerythritol"/>
</dbReference>
<dbReference type="DrugBank" id="DB03654">
    <property type="generic name" value="S,S-Propylthiocysteine"/>
</dbReference>
<dbReference type="PaxDb" id="169963-lmo0200"/>
<dbReference type="EnsemblBacteria" id="CAD00727">
    <property type="protein sequence ID" value="CAD00727"/>
    <property type="gene ID" value="CAD00727"/>
</dbReference>
<dbReference type="GeneID" id="987031"/>
<dbReference type="KEGG" id="lmo:lmo0200"/>
<dbReference type="PATRIC" id="fig|169963.11.peg.205"/>
<dbReference type="eggNOG" id="COG0664">
    <property type="taxonomic scope" value="Bacteria"/>
</dbReference>
<dbReference type="HOGENOM" id="CLU_1173961_0_0_9"/>
<dbReference type="OrthoDB" id="9810708at2"/>
<dbReference type="PhylomeDB" id="P22262"/>
<dbReference type="BioCyc" id="LMON169963:LMO0200-MONOMER"/>
<dbReference type="EvolutionaryTrace" id="P22262"/>
<dbReference type="PHI-base" id="PHI:7470"/>
<dbReference type="PHI-base" id="PHI:7898"/>
<dbReference type="Proteomes" id="UP000000817">
    <property type="component" value="Chromosome"/>
</dbReference>
<dbReference type="GO" id="GO:0005829">
    <property type="term" value="C:cytosol"/>
    <property type="evidence" value="ECO:0000318"/>
    <property type="project" value="GO_Central"/>
</dbReference>
<dbReference type="GO" id="GO:0003677">
    <property type="term" value="F:DNA binding"/>
    <property type="evidence" value="ECO:0007669"/>
    <property type="project" value="UniProtKB-KW"/>
</dbReference>
<dbReference type="GO" id="GO:0003700">
    <property type="term" value="F:DNA-binding transcription factor activity"/>
    <property type="evidence" value="ECO:0000318"/>
    <property type="project" value="GO_Central"/>
</dbReference>
<dbReference type="Gene3D" id="2.60.120.10">
    <property type="entry name" value="Jelly Rolls"/>
    <property type="match status" value="1"/>
</dbReference>
<dbReference type="Gene3D" id="1.20.5.460">
    <property type="entry name" value="Single helix bin"/>
    <property type="match status" value="1"/>
</dbReference>
<dbReference type="Gene3D" id="1.10.10.10">
    <property type="entry name" value="Winged helix-like DNA-binding domain superfamily/Winged helix DNA-binding domain"/>
    <property type="match status" value="1"/>
</dbReference>
<dbReference type="InterPro" id="IPR018490">
    <property type="entry name" value="cNMP-bd_dom_sf"/>
</dbReference>
<dbReference type="InterPro" id="IPR012318">
    <property type="entry name" value="HTH_CRP"/>
</dbReference>
<dbReference type="InterPro" id="IPR014710">
    <property type="entry name" value="RmlC-like_jellyroll"/>
</dbReference>
<dbReference type="InterPro" id="IPR018335">
    <property type="entry name" value="Tscrpt_reg_HTH_Crp-type_CS"/>
</dbReference>
<dbReference type="InterPro" id="IPR036388">
    <property type="entry name" value="WH-like_DNA-bd_sf"/>
</dbReference>
<dbReference type="InterPro" id="IPR036390">
    <property type="entry name" value="WH_DNA-bd_sf"/>
</dbReference>
<dbReference type="SUPFAM" id="SSF51206">
    <property type="entry name" value="cAMP-binding domain-like"/>
    <property type="match status" value="1"/>
</dbReference>
<dbReference type="SUPFAM" id="SSF46785">
    <property type="entry name" value="Winged helix' DNA-binding domain"/>
    <property type="match status" value="1"/>
</dbReference>
<dbReference type="PROSITE" id="PS00042">
    <property type="entry name" value="HTH_CRP_1"/>
    <property type="match status" value="1"/>
</dbReference>
<dbReference type="PROSITE" id="PS51063">
    <property type="entry name" value="HTH_CRP_2"/>
    <property type="match status" value="1"/>
</dbReference>
<sequence length="237" mass="27301">MNAQAEEFKKYLETNGIKPKQFHKKELIFNQWDPQEYCIFLYDGITKLTSISENGTIMNLQYYKGAFVIMSGFIDTETSVGYYNLEVISEQATAYVIKINELKELLSKNLTHFFYVFQTLQKQVSYSLAKFNDFSINGKLGSICGQLLILTYVYGKETPDGIKITLDNLTMQELGYSSGIAHSSAVSRIISKLKQEKVIVYKNSCFYVQNLDYLKRYAPKLDEWFYLACPATWGKLN</sequence>
<organism>
    <name type="scientific">Listeria monocytogenes serovar 1/2a (strain ATCC BAA-679 / EGD-e)</name>
    <dbReference type="NCBI Taxonomy" id="169963"/>
    <lineage>
        <taxon>Bacteria</taxon>
        <taxon>Bacillati</taxon>
        <taxon>Bacillota</taxon>
        <taxon>Bacilli</taxon>
        <taxon>Bacillales</taxon>
        <taxon>Listeriaceae</taxon>
        <taxon>Listeria</taxon>
    </lineage>
</organism>
<feature type="chain" id="PRO_0000100188" description="Listeriolysin regulatory protein">
    <location>
        <begin position="1"/>
        <end position="237"/>
    </location>
</feature>
<feature type="domain" description="HTH crp-type" evidence="1">
    <location>
        <begin position="137"/>
        <end position="212"/>
    </location>
</feature>
<feature type="sequence variant" description="In prfA* mutant which constitutively overexpresses virulence genes. Presumably blocks prfA in a cofactor-independent transcriptionally active conformation.">
    <original>G</original>
    <variation>S</variation>
    <location>
        <position position="145"/>
    </location>
</feature>
<feature type="sequence conflict" description="In Ref. 2." evidence="2" ref="2">
    <original>GKL</original>
    <variation>E</variation>
    <location>
        <begin position="234"/>
        <end position="236"/>
    </location>
</feature>
<feature type="helix" evidence="5">
    <location>
        <begin position="3"/>
        <end position="14"/>
    </location>
</feature>
<feature type="strand" evidence="5">
    <location>
        <begin position="20"/>
        <end position="23"/>
    </location>
</feature>
<feature type="strand" evidence="5">
    <location>
        <begin position="27"/>
        <end position="29"/>
    </location>
</feature>
<feature type="strand" evidence="3">
    <location>
        <begin position="31"/>
        <end position="33"/>
    </location>
</feature>
<feature type="strand" evidence="5">
    <location>
        <begin position="37"/>
        <end position="51"/>
    </location>
</feature>
<feature type="turn" evidence="4">
    <location>
        <begin position="53"/>
        <end position="55"/>
    </location>
</feature>
<feature type="strand" evidence="5">
    <location>
        <begin position="57"/>
        <end position="72"/>
    </location>
</feature>
<feature type="turn" evidence="5">
    <location>
        <begin position="74"/>
        <end position="76"/>
    </location>
</feature>
<feature type="strand" evidence="5">
    <location>
        <begin position="79"/>
        <end position="82"/>
    </location>
</feature>
<feature type="strand" evidence="5">
    <location>
        <begin position="84"/>
        <end position="87"/>
    </location>
</feature>
<feature type="strand" evidence="5">
    <location>
        <begin position="89"/>
        <end position="98"/>
    </location>
</feature>
<feature type="helix" evidence="5">
    <location>
        <begin position="99"/>
        <end position="106"/>
    </location>
</feature>
<feature type="helix" evidence="5">
    <location>
        <begin position="110"/>
        <end position="154"/>
    </location>
</feature>
<feature type="strand" evidence="5">
    <location>
        <begin position="155"/>
        <end position="158"/>
    </location>
</feature>
<feature type="strand" evidence="5">
    <location>
        <begin position="161"/>
        <end position="164"/>
    </location>
</feature>
<feature type="helix" evidence="5">
    <location>
        <begin position="168"/>
        <end position="175"/>
    </location>
</feature>
<feature type="strand" evidence="5">
    <location>
        <begin position="178"/>
        <end position="180"/>
    </location>
</feature>
<feature type="helix" evidence="5">
    <location>
        <begin position="184"/>
        <end position="195"/>
    </location>
</feature>
<feature type="strand" evidence="5">
    <location>
        <begin position="198"/>
        <end position="202"/>
    </location>
</feature>
<feature type="strand" evidence="5">
    <location>
        <begin position="205"/>
        <end position="208"/>
    </location>
</feature>
<feature type="helix" evidence="5">
    <location>
        <begin position="211"/>
        <end position="217"/>
    </location>
</feature>
<feature type="helix" evidence="5">
    <location>
        <begin position="219"/>
        <end position="228"/>
    </location>
</feature>
<feature type="helix" evidence="5">
    <location>
        <begin position="230"/>
        <end position="235"/>
    </location>
</feature>
<proteinExistence type="evidence at protein level"/>
<keyword id="KW-0002">3D-structure</keyword>
<keyword id="KW-0010">Activator</keyword>
<keyword id="KW-0238">DNA-binding</keyword>
<keyword id="KW-1185">Reference proteome</keyword>
<keyword id="KW-0804">Transcription</keyword>
<keyword id="KW-0805">Transcription regulation</keyword>
<keyword id="KW-0843">Virulence</keyword>
<protein>
    <recommendedName>
        <fullName>Listeriolysin regulatory protein</fullName>
    </recommendedName>
</protein>
<comment type="function">
    <text>Positively regulates expression of listeriolysin, of 1-phosphadidylinositol phosphodiesterase (PI-PLC) and other virulence factors.</text>
</comment>
<name>PRFA_LISMO</name>
<accession>P22262</accession>